<comment type="function">
    <text evidence="1">Required for maturation of urease via the functional incorporation of the urease nickel metallocenter.</text>
</comment>
<comment type="subunit">
    <text evidence="1">UreD, UreF and UreG form a complex that acts as a GTP-hydrolysis-dependent molecular chaperone, activating the urease apoprotein by helping to assemble the nickel containing metallocenter of UreC. The UreE protein probably delivers the nickel.</text>
</comment>
<comment type="subcellular location">
    <subcellularLocation>
        <location evidence="1">Cytoplasm</location>
    </subcellularLocation>
</comment>
<comment type="similarity">
    <text evidence="1">Belongs to the UreD family.</text>
</comment>
<accession>Q9KG55</accession>
<dbReference type="EMBL" id="BA000004">
    <property type="protein sequence ID" value="BAB03977.1"/>
    <property type="molecule type" value="Genomic_DNA"/>
</dbReference>
<dbReference type="PIR" id="B83682">
    <property type="entry name" value="B83682"/>
</dbReference>
<dbReference type="RefSeq" id="WP_010896440.1">
    <property type="nucleotide sequence ID" value="NC_002570.2"/>
</dbReference>
<dbReference type="SMR" id="Q9KG55"/>
<dbReference type="STRING" id="272558.gene:10726103"/>
<dbReference type="DNASU" id="892534"/>
<dbReference type="GeneID" id="87595811"/>
<dbReference type="KEGG" id="bha:BH0258"/>
<dbReference type="eggNOG" id="COG0829">
    <property type="taxonomic scope" value="Bacteria"/>
</dbReference>
<dbReference type="HOGENOM" id="CLU_056339_5_1_9"/>
<dbReference type="OrthoDB" id="5328682at2"/>
<dbReference type="Proteomes" id="UP000001258">
    <property type="component" value="Chromosome"/>
</dbReference>
<dbReference type="GO" id="GO:0005737">
    <property type="term" value="C:cytoplasm"/>
    <property type="evidence" value="ECO:0007669"/>
    <property type="project" value="UniProtKB-SubCell"/>
</dbReference>
<dbReference type="GO" id="GO:0016151">
    <property type="term" value="F:nickel cation binding"/>
    <property type="evidence" value="ECO:0007669"/>
    <property type="project" value="UniProtKB-UniRule"/>
</dbReference>
<dbReference type="HAMAP" id="MF_01384">
    <property type="entry name" value="UreD"/>
    <property type="match status" value="1"/>
</dbReference>
<dbReference type="InterPro" id="IPR002669">
    <property type="entry name" value="UreD"/>
</dbReference>
<dbReference type="PANTHER" id="PTHR33643">
    <property type="entry name" value="UREASE ACCESSORY PROTEIN D"/>
    <property type="match status" value="1"/>
</dbReference>
<dbReference type="PANTHER" id="PTHR33643:SF1">
    <property type="entry name" value="UREASE ACCESSORY PROTEIN D"/>
    <property type="match status" value="1"/>
</dbReference>
<dbReference type="Pfam" id="PF01774">
    <property type="entry name" value="UreD"/>
    <property type="match status" value="1"/>
</dbReference>
<organism>
    <name type="scientific">Halalkalibacterium halodurans (strain ATCC BAA-125 / DSM 18197 / FERM 7344 / JCM 9153 / C-125)</name>
    <name type="common">Bacillus halodurans</name>
    <dbReference type="NCBI Taxonomy" id="272558"/>
    <lineage>
        <taxon>Bacteria</taxon>
        <taxon>Bacillati</taxon>
        <taxon>Bacillota</taxon>
        <taxon>Bacilli</taxon>
        <taxon>Bacillales</taxon>
        <taxon>Bacillaceae</taxon>
        <taxon>Halalkalibacterium (ex Joshi et al. 2022)</taxon>
    </lineage>
</organism>
<proteinExistence type="inferred from homology"/>
<sequence length="271" mass="30855">MRASSHLPQLHGRLDLTFERRRGTTRLVASEQTPPLNVSRVLRTEEVDLATVYLVETSGGVVSGDSQTIAIYVGEGARVELIPQSATKVYPSRKQGESSTQQVWLRVDEGAAAFWKPESIIPFRKASFLQSTRFHLHSSSTFFYGDMLTPGRVHHNERFQYEQVDSLVEIYLDETLVVHDRVHLQPKDQLQTIGRLDGYSYYGAVWMHAPILKGAHLEQWMENGGQNDRFAYTCVAEGLIHVRWLSESSWRLRAALNDLYTAFRTFALKGE</sequence>
<gene>
    <name evidence="1" type="primary">ureD</name>
    <name type="ordered locus">BH0258</name>
</gene>
<evidence type="ECO:0000255" key="1">
    <source>
        <dbReference type="HAMAP-Rule" id="MF_01384"/>
    </source>
</evidence>
<name>URED_HALH5</name>
<feature type="chain" id="PRO_0000346552" description="Urease accessory protein UreD">
    <location>
        <begin position="1"/>
        <end position="271"/>
    </location>
</feature>
<keyword id="KW-0143">Chaperone</keyword>
<keyword id="KW-0963">Cytoplasm</keyword>
<keyword id="KW-0996">Nickel insertion</keyword>
<keyword id="KW-1185">Reference proteome</keyword>
<reference key="1">
    <citation type="journal article" date="2000" name="Nucleic Acids Res.">
        <title>Complete genome sequence of the alkaliphilic bacterium Bacillus halodurans and genomic sequence comparison with Bacillus subtilis.</title>
        <authorList>
            <person name="Takami H."/>
            <person name="Nakasone K."/>
            <person name="Takaki Y."/>
            <person name="Maeno G."/>
            <person name="Sasaki R."/>
            <person name="Masui N."/>
            <person name="Fuji F."/>
            <person name="Hirama C."/>
            <person name="Nakamura Y."/>
            <person name="Ogasawara N."/>
            <person name="Kuhara S."/>
            <person name="Horikoshi K."/>
        </authorList>
    </citation>
    <scope>NUCLEOTIDE SEQUENCE [LARGE SCALE GENOMIC DNA]</scope>
    <source>
        <strain>ATCC BAA-125 / DSM 18197 / FERM 7344 / JCM 9153 / C-125</strain>
    </source>
</reference>
<protein>
    <recommendedName>
        <fullName evidence="1">Urease accessory protein UreD</fullName>
    </recommendedName>
</protein>